<proteinExistence type="inferred from homology"/>
<protein>
    <recommendedName>
        <fullName evidence="1">Holliday junction branch migration complex subunit RuvB</fullName>
        <ecNumber evidence="1">3.6.4.-</ecNumber>
    </recommendedName>
</protein>
<accession>Q5GT33</accession>
<name>RUVB_WOLTR</name>
<comment type="function">
    <text evidence="1">The RuvA-RuvB-RuvC complex processes Holliday junction (HJ) DNA during genetic recombination and DNA repair, while the RuvA-RuvB complex plays an important role in the rescue of blocked DNA replication forks via replication fork reversal (RFR). RuvA specifically binds to HJ cruciform DNA, conferring on it an open structure. The RuvB hexamer acts as an ATP-dependent pump, pulling dsDNA into and through the RuvAB complex. RuvB forms 2 homohexamers on either side of HJ DNA bound by 1 or 2 RuvA tetramers; 4 subunits per hexamer contact DNA at a time. Coordinated motions by a converter formed by DNA-disengaged RuvB subunits stimulates ATP hydrolysis and nucleotide exchange. Immobilization of the converter enables RuvB to convert the ATP-contained energy into a lever motion, pulling 2 nucleotides of DNA out of the RuvA tetramer per ATP hydrolyzed, thus driving DNA branch migration. The RuvB motors rotate together with the DNA substrate, which together with the progressing nucleotide cycle form the mechanistic basis for DNA recombination by continuous HJ branch migration. Branch migration allows RuvC to scan DNA until it finds its consensus sequence, where it cleaves and resolves cruciform DNA.</text>
</comment>
<comment type="catalytic activity">
    <reaction evidence="1">
        <text>ATP + H2O = ADP + phosphate + H(+)</text>
        <dbReference type="Rhea" id="RHEA:13065"/>
        <dbReference type="ChEBI" id="CHEBI:15377"/>
        <dbReference type="ChEBI" id="CHEBI:15378"/>
        <dbReference type="ChEBI" id="CHEBI:30616"/>
        <dbReference type="ChEBI" id="CHEBI:43474"/>
        <dbReference type="ChEBI" id="CHEBI:456216"/>
    </reaction>
</comment>
<comment type="subunit">
    <text evidence="1">Homohexamer. Forms an RuvA(8)-RuvB(12)-Holliday junction (HJ) complex. HJ DNA is sandwiched between 2 RuvA tetramers; dsDNA enters through RuvA and exits via RuvB. An RuvB hexamer assembles on each DNA strand where it exits the tetramer. Each RuvB hexamer is contacted by two RuvA subunits (via domain III) on 2 adjacent RuvB subunits; this complex drives branch migration. In the full resolvosome a probable DNA-RuvA(4)-RuvB(12)-RuvC(2) complex forms which resolves the HJ.</text>
</comment>
<comment type="subcellular location">
    <subcellularLocation>
        <location evidence="1">Cytoplasm</location>
    </subcellularLocation>
</comment>
<comment type="domain">
    <text evidence="1">Has 3 domains, the large (RuvB-L) and small ATPase (RuvB-S) domains and the C-terminal head (RuvB-H) domain. The head domain binds DNA, while the ATPase domains jointly bind ATP, ADP or are empty depending on the state of the subunit in the translocation cycle. During a single DNA translocation step the structure of each domain remains the same, but their relative positions change.</text>
</comment>
<comment type="similarity">
    <text evidence="1">Belongs to the RuvB family.</text>
</comment>
<keyword id="KW-0067">ATP-binding</keyword>
<keyword id="KW-0963">Cytoplasm</keyword>
<keyword id="KW-0227">DNA damage</keyword>
<keyword id="KW-0233">DNA recombination</keyword>
<keyword id="KW-0234">DNA repair</keyword>
<keyword id="KW-0238">DNA-binding</keyword>
<keyword id="KW-0378">Hydrolase</keyword>
<keyword id="KW-0547">Nucleotide-binding</keyword>
<keyword id="KW-1185">Reference proteome</keyword>
<dbReference type="EC" id="3.6.4.-" evidence="1"/>
<dbReference type="EMBL" id="AE017321">
    <property type="protein sequence ID" value="AAW70841.1"/>
    <property type="molecule type" value="Genomic_DNA"/>
</dbReference>
<dbReference type="RefSeq" id="WP_011256451.1">
    <property type="nucleotide sequence ID" value="NC_006833.1"/>
</dbReference>
<dbReference type="SMR" id="Q5GT33"/>
<dbReference type="STRING" id="292805.Wbm0252"/>
<dbReference type="KEGG" id="wbm:Wbm0252"/>
<dbReference type="eggNOG" id="COG2255">
    <property type="taxonomic scope" value="Bacteria"/>
</dbReference>
<dbReference type="HOGENOM" id="CLU_055599_1_0_5"/>
<dbReference type="Proteomes" id="UP000000534">
    <property type="component" value="Chromosome"/>
</dbReference>
<dbReference type="GO" id="GO:0005737">
    <property type="term" value="C:cytoplasm"/>
    <property type="evidence" value="ECO:0007669"/>
    <property type="project" value="UniProtKB-SubCell"/>
</dbReference>
<dbReference type="GO" id="GO:0048476">
    <property type="term" value="C:Holliday junction resolvase complex"/>
    <property type="evidence" value="ECO:0007669"/>
    <property type="project" value="UniProtKB-UniRule"/>
</dbReference>
<dbReference type="GO" id="GO:0005524">
    <property type="term" value="F:ATP binding"/>
    <property type="evidence" value="ECO:0007669"/>
    <property type="project" value="UniProtKB-UniRule"/>
</dbReference>
<dbReference type="GO" id="GO:0016887">
    <property type="term" value="F:ATP hydrolysis activity"/>
    <property type="evidence" value="ECO:0007669"/>
    <property type="project" value="InterPro"/>
</dbReference>
<dbReference type="GO" id="GO:0000400">
    <property type="term" value="F:four-way junction DNA binding"/>
    <property type="evidence" value="ECO:0007669"/>
    <property type="project" value="UniProtKB-UniRule"/>
</dbReference>
<dbReference type="GO" id="GO:0009378">
    <property type="term" value="F:four-way junction helicase activity"/>
    <property type="evidence" value="ECO:0007669"/>
    <property type="project" value="InterPro"/>
</dbReference>
<dbReference type="GO" id="GO:0006310">
    <property type="term" value="P:DNA recombination"/>
    <property type="evidence" value="ECO:0007669"/>
    <property type="project" value="UniProtKB-UniRule"/>
</dbReference>
<dbReference type="GO" id="GO:0006281">
    <property type="term" value="P:DNA repair"/>
    <property type="evidence" value="ECO:0007669"/>
    <property type="project" value="UniProtKB-UniRule"/>
</dbReference>
<dbReference type="CDD" id="cd00009">
    <property type="entry name" value="AAA"/>
    <property type="match status" value="1"/>
</dbReference>
<dbReference type="Gene3D" id="1.10.8.60">
    <property type="match status" value="1"/>
</dbReference>
<dbReference type="Gene3D" id="3.40.50.300">
    <property type="entry name" value="P-loop containing nucleotide triphosphate hydrolases"/>
    <property type="match status" value="1"/>
</dbReference>
<dbReference type="Gene3D" id="1.10.10.10">
    <property type="entry name" value="Winged helix-like DNA-binding domain superfamily/Winged helix DNA-binding domain"/>
    <property type="match status" value="1"/>
</dbReference>
<dbReference type="HAMAP" id="MF_00016">
    <property type="entry name" value="DNA_HJ_migration_RuvB"/>
    <property type="match status" value="1"/>
</dbReference>
<dbReference type="InterPro" id="IPR003593">
    <property type="entry name" value="AAA+_ATPase"/>
</dbReference>
<dbReference type="InterPro" id="IPR041445">
    <property type="entry name" value="AAA_lid_4"/>
</dbReference>
<dbReference type="InterPro" id="IPR004605">
    <property type="entry name" value="DNA_helicase_Holl-junc_RuvB"/>
</dbReference>
<dbReference type="InterPro" id="IPR027417">
    <property type="entry name" value="P-loop_NTPase"/>
</dbReference>
<dbReference type="InterPro" id="IPR008824">
    <property type="entry name" value="RuvB-like_N"/>
</dbReference>
<dbReference type="InterPro" id="IPR008823">
    <property type="entry name" value="RuvB_C"/>
</dbReference>
<dbReference type="InterPro" id="IPR036388">
    <property type="entry name" value="WH-like_DNA-bd_sf"/>
</dbReference>
<dbReference type="InterPro" id="IPR036390">
    <property type="entry name" value="WH_DNA-bd_sf"/>
</dbReference>
<dbReference type="NCBIfam" id="NF000868">
    <property type="entry name" value="PRK00080.1"/>
    <property type="match status" value="1"/>
</dbReference>
<dbReference type="NCBIfam" id="TIGR00635">
    <property type="entry name" value="ruvB"/>
    <property type="match status" value="1"/>
</dbReference>
<dbReference type="PANTHER" id="PTHR42848">
    <property type="match status" value="1"/>
</dbReference>
<dbReference type="PANTHER" id="PTHR42848:SF1">
    <property type="entry name" value="HOLLIDAY JUNCTION BRANCH MIGRATION COMPLEX SUBUNIT RUVB"/>
    <property type="match status" value="1"/>
</dbReference>
<dbReference type="Pfam" id="PF17864">
    <property type="entry name" value="AAA_lid_4"/>
    <property type="match status" value="1"/>
</dbReference>
<dbReference type="Pfam" id="PF05491">
    <property type="entry name" value="RuvB_C"/>
    <property type="match status" value="1"/>
</dbReference>
<dbReference type="Pfam" id="PF05496">
    <property type="entry name" value="RuvB_N"/>
    <property type="match status" value="1"/>
</dbReference>
<dbReference type="SMART" id="SM00382">
    <property type="entry name" value="AAA"/>
    <property type="match status" value="1"/>
</dbReference>
<dbReference type="SUPFAM" id="SSF52540">
    <property type="entry name" value="P-loop containing nucleoside triphosphate hydrolases"/>
    <property type="match status" value="1"/>
</dbReference>
<dbReference type="SUPFAM" id="SSF46785">
    <property type="entry name" value="Winged helix' DNA-binding domain"/>
    <property type="match status" value="1"/>
</dbReference>
<gene>
    <name evidence="1" type="primary">ruvB</name>
    <name type="ordered locus">Wbm0252</name>
</gene>
<sequence>MRSISCSKEYAEDVRNLNIRPEQLDDFFGQKDLIQNLKVFINAAKTRTEALDHVLLHGPPGLGKTTLAQIISKELRVSFRATSGPLLNKAGDLAAVLTTLNAKDVLFIDEIHRLNRSIEEVLYTAMEDFCLDLLVGEGPSTRTLRIDLPPFTLVGATTRLGLLSAPLRDRFGIPLRLEFYSFEELVDIIKRGTKVFSAEIEEDAIQEIACRARGTPRIALRLLRRIRDFVEVKDNKKITHKIADSALSKLGIDKMGLNKLDVDYLRFLFNTSGSVGIDTISIALSEDSGNIEETVEPYLVKISFVKRTPRGRVLTDQGKEYLSLQY</sequence>
<organism>
    <name type="scientific">Wolbachia sp. subsp. Brugia malayi (strain TRS)</name>
    <dbReference type="NCBI Taxonomy" id="292805"/>
    <lineage>
        <taxon>Bacteria</taxon>
        <taxon>Pseudomonadati</taxon>
        <taxon>Pseudomonadota</taxon>
        <taxon>Alphaproteobacteria</taxon>
        <taxon>Rickettsiales</taxon>
        <taxon>Anaplasmataceae</taxon>
        <taxon>Wolbachieae</taxon>
        <taxon>Wolbachia</taxon>
    </lineage>
</organism>
<feature type="chain" id="PRO_0000235428" description="Holliday junction branch migration complex subunit RuvB">
    <location>
        <begin position="1"/>
        <end position="326"/>
    </location>
</feature>
<feature type="region of interest" description="Large ATPase domain (RuvB-L)" evidence="1">
    <location>
        <begin position="1"/>
        <end position="180"/>
    </location>
</feature>
<feature type="region of interest" description="Small ATPAse domain (RuvB-S)" evidence="1">
    <location>
        <begin position="181"/>
        <end position="251"/>
    </location>
</feature>
<feature type="region of interest" description="Head domain (RuvB-H)" evidence="1">
    <location>
        <begin position="254"/>
        <end position="326"/>
    </location>
</feature>
<feature type="binding site" evidence="1">
    <location>
        <position position="19"/>
    </location>
    <ligand>
        <name>ATP</name>
        <dbReference type="ChEBI" id="CHEBI:30616"/>
    </ligand>
</feature>
<feature type="binding site" evidence="1">
    <location>
        <position position="20"/>
    </location>
    <ligand>
        <name>ATP</name>
        <dbReference type="ChEBI" id="CHEBI:30616"/>
    </ligand>
</feature>
<feature type="binding site" evidence="1">
    <location>
        <position position="61"/>
    </location>
    <ligand>
        <name>ATP</name>
        <dbReference type="ChEBI" id="CHEBI:30616"/>
    </ligand>
</feature>
<feature type="binding site" evidence="1">
    <location>
        <position position="64"/>
    </location>
    <ligand>
        <name>ATP</name>
        <dbReference type="ChEBI" id="CHEBI:30616"/>
    </ligand>
</feature>
<feature type="binding site" evidence="1">
    <location>
        <position position="65"/>
    </location>
    <ligand>
        <name>ATP</name>
        <dbReference type="ChEBI" id="CHEBI:30616"/>
    </ligand>
</feature>
<feature type="binding site" evidence="1">
    <location>
        <position position="65"/>
    </location>
    <ligand>
        <name>Mg(2+)</name>
        <dbReference type="ChEBI" id="CHEBI:18420"/>
    </ligand>
</feature>
<feature type="binding site" evidence="1">
    <location>
        <position position="66"/>
    </location>
    <ligand>
        <name>ATP</name>
        <dbReference type="ChEBI" id="CHEBI:30616"/>
    </ligand>
</feature>
<feature type="binding site" evidence="1">
    <location>
        <begin position="127"/>
        <end position="129"/>
    </location>
    <ligand>
        <name>ATP</name>
        <dbReference type="ChEBI" id="CHEBI:30616"/>
    </ligand>
</feature>
<feature type="binding site" evidence="1">
    <location>
        <position position="170"/>
    </location>
    <ligand>
        <name>ATP</name>
        <dbReference type="ChEBI" id="CHEBI:30616"/>
    </ligand>
</feature>
<feature type="binding site" evidence="1">
    <location>
        <position position="180"/>
    </location>
    <ligand>
        <name>ATP</name>
        <dbReference type="ChEBI" id="CHEBI:30616"/>
    </ligand>
</feature>
<feature type="binding site" evidence="1">
    <location>
        <position position="217"/>
    </location>
    <ligand>
        <name>ATP</name>
        <dbReference type="ChEBI" id="CHEBI:30616"/>
    </ligand>
</feature>
<feature type="binding site" evidence="1">
    <location>
        <position position="307"/>
    </location>
    <ligand>
        <name>DNA</name>
        <dbReference type="ChEBI" id="CHEBI:16991"/>
    </ligand>
</feature>
<feature type="binding site" evidence="1">
    <location>
        <position position="312"/>
    </location>
    <ligand>
        <name>DNA</name>
        <dbReference type="ChEBI" id="CHEBI:16991"/>
    </ligand>
</feature>
<reference key="1">
    <citation type="journal article" date="2005" name="PLoS Biol.">
        <title>The Wolbachia genome of Brugia malayi: endosymbiont evolution within a human pathogenic nematode.</title>
        <authorList>
            <person name="Foster J."/>
            <person name="Ganatra M."/>
            <person name="Kamal I."/>
            <person name="Ware J."/>
            <person name="Makarova K."/>
            <person name="Ivanova N."/>
            <person name="Bhattacharyya A."/>
            <person name="Kapatral V."/>
            <person name="Kumar S."/>
            <person name="Posfai J."/>
            <person name="Vincze T."/>
            <person name="Ingram J."/>
            <person name="Moran L."/>
            <person name="Lapidus A."/>
            <person name="Omelchenko M."/>
            <person name="Kyrpides N."/>
            <person name="Ghedin E."/>
            <person name="Wang S."/>
            <person name="Goltsman E."/>
            <person name="Joukov V."/>
            <person name="Ostrovskaya O."/>
            <person name="Tsukerman K."/>
            <person name="Mazur M."/>
            <person name="Comb D."/>
            <person name="Koonin E."/>
            <person name="Slatko B."/>
        </authorList>
    </citation>
    <scope>NUCLEOTIDE SEQUENCE [LARGE SCALE GENOMIC DNA]</scope>
    <source>
        <strain>TRS</strain>
    </source>
</reference>
<evidence type="ECO:0000255" key="1">
    <source>
        <dbReference type="HAMAP-Rule" id="MF_00016"/>
    </source>
</evidence>